<keyword id="KW-0328">Glycosyltransferase</keyword>
<keyword id="KW-0460">Magnesium</keyword>
<keyword id="KW-0665">Pyrimidine biosynthesis</keyword>
<keyword id="KW-0808">Transferase</keyword>
<accession>B7VHJ8</accession>
<gene>
    <name evidence="1" type="primary">pyrE</name>
    <name type="ordered locus">VS_0178</name>
</gene>
<proteinExistence type="inferred from homology"/>
<organism>
    <name type="scientific">Vibrio atlanticus (strain LGP32)</name>
    <name type="common">Vibrio splendidus (strain Mel32)</name>
    <dbReference type="NCBI Taxonomy" id="575788"/>
    <lineage>
        <taxon>Bacteria</taxon>
        <taxon>Pseudomonadati</taxon>
        <taxon>Pseudomonadota</taxon>
        <taxon>Gammaproteobacteria</taxon>
        <taxon>Vibrionales</taxon>
        <taxon>Vibrionaceae</taxon>
        <taxon>Vibrio</taxon>
    </lineage>
</organism>
<reference key="1">
    <citation type="submission" date="2009-02" db="EMBL/GenBank/DDBJ databases">
        <title>Vibrio splendidus str. LGP32 complete genome.</title>
        <authorList>
            <person name="Mazel D."/>
            <person name="Le Roux F."/>
        </authorList>
    </citation>
    <scope>NUCLEOTIDE SEQUENCE [LARGE SCALE GENOMIC DNA]</scope>
    <source>
        <strain>LGP32</strain>
    </source>
</reference>
<sequence length="213" mass="23219">MKAYQREFIEFALEKEVLKFGEFTLKSGRKSPYFFNAGLFNTGRDLARLGRFYAAALADSGIEFDVLFGPAYKGIPIATTTAVALADHHDVDTPYCFNRKEAKNHGEGGNLVGSELEGRIMLVDDVITAGTAIRESMEIIQANGADLAGVLVAIDRQEKGKGELSAIQEVERDFGCAIISIVSLTDLVTFLEEKGTDAAHLESVKAYRAQYGI</sequence>
<comment type="function">
    <text evidence="1">Catalyzes the transfer of a ribosyl phosphate group from 5-phosphoribose 1-diphosphate to orotate, leading to the formation of orotidine monophosphate (OMP).</text>
</comment>
<comment type="catalytic activity">
    <reaction evidence="1">
        <text>orotidine 5'-phosphate + diphosphate = orotate + 5-phospho-alpha-D-ribose 1-diphosphate</text>
        <dbReference type="Rhea" id="RHEA:10380"/>
        <dbReference type="ChEBI" id="CHEBI:30839"/>
        <dbReference type="ChEBI" id="CHEBI:33019"/>
        <dbReference type="ChEBI" id="CHEBI:57538"/>
        <dbReference type="ChEBI" id="CHEBI:58017"/>
        <dbReference type="EC" id="2.4.2.10"/>
    </reaction>
</comment>
<comment type="cofactor">
    <cofactor evidence="1">
        <name>Mg(2+)</name>
        <dbReference type="ChEBI" id="CHEBI:18420"/>
    </cofactor>
</comment>
<comment type="pathway">
    <text evidence="1">Pyrimidine metabolism; UMP biosynthesis via de novo pathway; UMP from orotate: step 1/2.</text>
</comment>
<comment type="subunit">
    <text evidence="1">Homodimer.</text>
</comment>
<comment type="similarity">
    <text evidence="1">Belongs to the purine/pyrimidine phosphoribosyltransferase family. PyrE subfamily.</text>
</comment>
<evidence type="ECO:0000255" key="1">
    <source>
        <dbReference type="HAMAP-Rule" id="MF_01208"/>
    </source>
</evidence>
<dbReference type="EC" id="2.4.2.10" evidence="1"/>
<dbReference type="EMBL" id="FM954972">
    <property type="protein sequence ID" value="CAV17210.1"/>
    <property type="molecule type" value="Genomic_DNA"/>
</dbReference>
<dbReference type="SMR" id="B7VHJ8"/>
<dbReference type="STRING" id="575788.VS_0178"/>
<dbReference type="KEGG" id="vsp:VS_0178"/>
<dbReference type="eggNOG" id="COG0461">
    <property type="taxonomic scope" value="Bacteria"/>
</dbReference>
<dbReference type="HOGENOM" id="CLU_074878_0_1_6"/>
<dbReference type="UniPathway" id="UPA00070">
    <property type="reaction ID" value="UER00119"/>
</dbReference>
<dbReference type="Proteomes" id="UP000009100">
    <property type="component" value="Chromosome 1"/>
</dbReference>
<dbReference type="GO" id="GO:0005737">
    <property type="term" value="C:cytoplasm"/>
    <property type="evidence" value="ECO:0007669"/>
    <property type="project" value="TreeGrafter"/>
</dbReference>
<dbReference type="GO" id="GO:0000287">
    <property type="term" value="F:magnesium ion binding"/>
    <property type="evidence" value="ECO:0007669"/>
    <property type="project" value="UniProtKB-UniRule"/>
</dbReference>
<dbReference type="GO" id="GO:0004588">
    <property type="term" value="F:orotate phosphoribosyltransferase activity"/>
    <property type="evidence" value="ECO:0007669"/>
    <property type="project" value="UniProtKB-UniRule"/>
</dbReference>
<dbReference type="GO" id="GO:0006207">
    <property type="term" value="P:'de novo' pyrimidine nucleobase biosynthetic process"/>
    <property type="evidence" value="ECO:0007669"/>
    <property type="project" value="TreeGrafter"/>
</dbReference>
<dbReference type="GO" id="GO:0044205">
    <property type="term" value="P:'de novo' UMP biosynthetic process"/>
    <property type="evidence" value="ECO:0007669"/>
    <property type="project" value="UniProtKB-UniRule"/>
</dbReference>
<dbReference type="GO" id="GO:0046132">
    <property type="term" value="P:pyrimidine ribonucleoside biosynthetic process"/>
    <property type="evidence" value="ECO:0007669"/>
    <property type="project" value="TreeGrafter"/>
</dbReference>
<dbReference type="CDD" id="cd06223">
    <property type="entry name" value="PRTases_typeI"/>
    <property type="match status" value="1"/>
</dbReference>
<dbReference type="FunFam" id="3.40.50.2020:FF:000008">
    <property type="entry name" value="Orotate phosphoribosyltransferase"/>
    <property type="match status" value="1"/>
</dbReference>
<dbReference type="Gene3D" id="3.40.50.2020">
    <property type="match status" value="1"/>
</dbReference>
<dbReference type="HAMAP" id="MF_01208">
    <property type="entry name" value="PyrE"/>
    <property type="match status" value="1"/>
</dbReference>
<dbReference type="InterPro" id="IPR023031">
    <property type="entry name" value="OPRT"/>
</dbReference>
<dbReference type="InterPro" id="IPR004467">
    <property type="entry name" value="Or_phspho_trans_dom"/>
</dbReference>
<dbReference type="InterPro" id="IPR000836">
    <property type="entry name" value="PRibTrfase_dom"/>
</dbReference>
<dbReference type="InterPro" id="IPR029057">
    <property type="entry name" value="PRTase-like"/>
</dbReference>
<dbReference type="NCBIfam" id="TIGR00336">
    <property type="entry name" value="pyrE"/>
    <property type="match status" value="1"/>
</dbReference>
<dbReference type="PANTHER" id="PTHR46683">
    <property type="entry name" value="OROTATE PHOSPHORIBOSYLTRANSFERASE 1-RELATED"/>
    <property type="match status" value="1"/>
</dbReference>
<dbReference type="PANTHER" id="PTHR46683:SF1">
    <property type="entry name" value="OROTATE PHOSPHORIBOSYLTRANSFERASE 1-RELATED"/>
    <property type="match status" value="1"/>
</dbReference>
<dbReference type="Pfam" id="PF00156">
    <property type="entry name" value="Pribosyltran"/>
    <property type="match status" value="1"/>
</dbReference>
<dbReference type="SUPFAM" id="SSF53271">
    <property type="entry name" value="PRTase-like"/>
    <property type="match status" value="1"/>
</dbReference>
<dbReference type="PROSITE" id="PS00103">
    <property type="entry name" value="PUR_PYR_PR_TRANSFER"/>
    <property type="match status" value="1"/>
</dbReference>
<protein>
    <recommendedName>
        <fullName evidence="1">Orotate phosphoribosyltransferase</fullName>
        <shortName evidence="1">OPRT</shortName>
        <shortName evidence="1">OPRTase</shortName>
        <ecNumber evidence="1">2.4.2.10</ecNumber>
    </recommendedName>
</protein>
<name>PYRE_VIBA3</name>
<feature type="chain" id="PRO_1000164694" description="Orotate phosphoribosyltransferase">
    <location>
        <begin position="1"/>
        <end position="213"/>
    </location>
</feature>
<feature type="binding site" description="in other chain" evidence="1">
    <location>
        <position position="26"/>
    </location>
    <ligand>
        <name>5-phospho-alpha-D-ribose 1-diphosphate</name>
        <dbReference type="ChEBI" id="CHEBI:58017"/>
        <note>ligand shared between dimeric partners</note>
    </ligand>
</feature>
<feature type="binding site" evidence="1">
    <location>
        <begin position="34"/>
        <end position="35"/>
    </location>
    <ligand>
        <name>orotate</name>
        <dbReference type="ChEBI" id="CHEBI:30839"/>
    </ligand>
</feature>
<feature type="binding site" description="in other chain" evidence="1">
    <location>
        <begin position="72"/>
        <end position="73"/>
    </location>
    <ligand>
        <name>5-phospho-alpha-D-ribose 1-diphosphate</name>
        <dbReference type="ChEBI" id="CHEBI:58017"/>
        <note>ligand shared between dimeric partners</note>
    </ligand>
</feature>
<feature type="binding site" evidence="1">
    <location>
        <position position="99"/>
    </location>
    <ligand>
        <name>5-phospho-alpha-D-ribose 1-diphosphate</name>
        <dbReference type="ChEBI" id="CHEBI:58017"/>
        <note>ligand shared between dimeric partners</note>
    </ligand>
</feature>
<feature type="binding site" description="in other chain" evidence="1">
    <location>
        <position position="100"/>
    </location>
    <ligand>
        <name>5-phospho-alpha-D-ribose 1-diphosphate</name>
        <dbReference type="ChEBI" id="CHEBI:58017"/>
        <note>ligand shared between dimeric partners</note>
    </ligand>
</feature>
<feature type="binding site" evidence="1">
    <location>
        <position position="103"/>
    </location>
    <ligand>
        <name>5-phospho-alpha-D-ribose 1-diphosphate</name>
        <dbReference type="ChEBI" id="CHEBI:58017"/>
        <note>ligand shared between dimeric partners</note>
    </ligand>
</feature>
<feature type="binding site" evidence="1">
    <location>
        <position position="105"/>
    </location>
    <ligand>
        <name>5-phospho-alpha-D-ribose 1-diphosphate</name>
        <dbReference type="ChEBI" id="CHEBI:58017"/>
        <note>ligand shared between dimeric partners</note>
    </ligand>
</feature>
<feature type="binding site" description="in other chain" evidence="1">
    <location>
        <begin position="124"/>
        <end position="132"/>
    </location>
    <ligand>
        <name>5-phospho-alpha-D-ribose 1-diphosphate</name>
        <dbReference type="ChEBI" id="CHEBI:58017"/>
        <note>ligand shared between dimeric partners</note>
    </ligand>
</feature>
<feature type="binding site" evidence="1">
    <location>
        <position position="128"/>
    </location>
    <ligand>
        <name>orotate</name>
        <dbReference type="ChEBI" id="CHEBI:30839"/>
    </ligand>
</feature>
<feature type="binding site" evidence="1">
    <location>
        <position position="156"/>
    </location>
    <ligand>
        <name>orotate</name>
        <dbReference type="ChEBI" id="CHEBI:30839"/>
    </ligand>
</feature>